<evidence type="ECO:0000250" key="1"/>
<evidence type="ECO:0000305" key="2"/>
<name>RTCA_ECO57</name>
<protein>
    <recommendedName>
        <fullName>RNA 3'-terminal phosphate cyclase</fullName>
        <shortName>RNA cyclase</shortName>
        <shortName>RNA-3'-phosphate cyclase</shortName>
        <ecNumber>6.5.1.4</ecNumber>
    </recommendedName>
</protein>
<organism>
    <name type="scientific">Escherichia coli O157:H7</name>
    <dbReference type="NCBI Taxonomy" id="83334"/>
    <lineage>
        <taxon>Bacteria</taxon>
        <taxon>Pseudomonadati</taxon>
        <taxon>Pseudomonadota</taxon>
        <taxon>Gammaproteobacteria</taxon>
        <taxon>Enterobacterales</taxon>
        <taxon>Enterobacteriaceae</taxon>
        <taxon>Escherichia</taxon>
    </lineage>
</organism>
<proteinExistence type="inferred from homology"/>
<sequence length="342" mass="36332">MKRMIALDGAQGEGGGQIMRSALSLSMITGQPFTITGIRAGRAKPGLLRQHLTAVKAATEICGATVEGAELGSQRLVFRPGTVRGGDYRFAIGSAGSCTLVLQTVLPALWFADGPSRVEVSGGTDNPSAPPADFIRRVLEPLLAKIGIHQQTTLLRHGFYPAGGGVVATEVSPVASFNTLQLGERGNIVQMRGEVLLAGVPRHVAEREIATLAASFSLHEQNIHNLPRDQGPGNTVSLEVESENITERFFVVGEKRVSAEVVAAQLVKEVKRYLASPAAVGEYLADQLVLPMALAGAGQFTVAHPSCHLLTNIAVVERFLPVRFTLAETDGVTRVMITKLTD</sequence>
<dbReference type="EC" id="6.5.1.4"/>
<dbReference type="EMBL" id="AE005174">
    <property type="protein sequence ID" value="AAG58524.1"/>
    <property type="molecule type" value="Genomic_DNA"/>
</dbReference>
<dbReference type="EMBL" id="BA000007">
    <property type="protein sequence ID" value="BAB37686.2"/>
    <property type="molecule type" value="Genomic_DNA"/>
</dbReference>
<dbReference type="PIR" id="G91161">
    <property type="entry name" value="G91161"/>
</dbReference>
<dbReference type="PIR" id="H86007">
    <property type="entry name" value="H86007"/>
</dbReference>
<dbReference type="RefSeq" id="NP_312290.2">
    <property type="nucleotide sequence ID" value="NC_002695.1"/>
</dbReference>
<dbReference type="RefSeq" id="WP_000827117.1">
    <property type="nucleotide sequence ID" value="NZ_VOAI01000004.1"/>
</dbReference>
<dbReference type="SMR" id="P58127"/>
<dbReference type="STRING" id="155864.Z4778"/>
<dbReference type="GeneID" id="915880"/>
<dbReference type="KEGG" id="ece:Z4778"/>
<dbReference type="KEGG" id="ecs:ECs_4263"/>
<dbReference type="PATRIC" id="fig|386585.9.peg.4453"/>
<dbReference type="eggNOG" id="COG0430">
    <property type="taxonomic scope" value="Bacteria"/>
</dbReference>
<dbReference type="HOGENOM" id="CLU_027882_0_0_6"/>
<dbReference type="OMA" id="WSPPIDY"/>
<dbReference type="Proteomes" id="UP000000558">
    <property type="component" value="Chromosome"/>
</dbReference>
<dbReference type="Proteomes" id="UP000002519">
    <property type="component" value="Chromosome"/>
</dbReference>
<dbReference type="GO" id="GO:0005737">
    <property type="term" value="C:cytoplasm"/>
    <property type="evidence" value="ECO:0007669"/>
    <property type="project" value="UniProtKB-SubCell"/>
</dbReference>
<dbReference type="GO" id="GO:0005524">
    <property type="term" value="F:ATP binding"/>
    <property type="evidence" value="ECO:0007669"/>
    <property type="project" value="UniProtKB-KW"/>
</dbReference>
<dbReference type="GO" id="GO:0003963">
    <property type="term" value="F:RNA-3'-phosphate cyclase activity"/>
    <property type="evidence" value="ECO:0007669"/>
    <property type="project" value="UniProtKB-UniRule"/>
</dbReference>
<dbReference type="GO" id="GO:0006396">
    <property type="term" value="P:RNA processing"/>
    <property type="evidence" value="ECO:0007669"/>
    <property type="project" value="InterPro"/>
</dbReference>
<dbReference type="FunFam" id="3.65.10.20:FF:000002">
    <property type="entry name" value="GM19193"/>
    <property type="match status" value="1"/>
</dbReference>
<dbReference type="FunFam" id="3.30.360.20:FF:000003">
    <property type="entry name" value="RNA 3'-terminal phosphate cyclase"/>
    <property type="match status" value="1"/>
</dbReference>
<dbReference type="Gene3D" id="3.65.10.20">
    <property type="entry name" value="RNA 3'-terminal phosphate cyclase domain"/>
    <property type="match status" value="1"/>
</dbReference>
<dbReference type="Gene3D" id="3.30.360.20">
    <property type="entry name" value="RNA 3'-terminal phosphate cyclase, insert domain"/>
    <property type="match status" value="1"/>
</dbReference>
<dbReference type="HAMAP" id="MF_00200">
    <property type="entry name" value="RTC"/>
    <property type="match status" value="1"/>
</dbReference>
<dbReference type="InterPro" id="IPR013791">
    <property type="entry name" value="RNA3'-term_phos_cycl_insert"/>
</dbReference>
<dbReference type="InterPro" id="IPR023797">
    <property type="entry name" value="RNA3'_phos_cyclase_dom"/>
</dbReference>
<dbReference type="InterPro" id="IPR037136">
    <property type="entry name" value="RNA3'_phos_cyclase_dom_sf"/>
</dbReference>
<dbReference type="InterPro" id="IPR000228">
    <property type="entry name" value="RNA3'_term_phos_cyc"/>
</dbReference>
<dbReference type="InterPro" id="IPR017770">
    <property type="entry name" value="RNA3'_term_phos_cyc_type_1"/>
</dbReference>
<dbReference type="InterPro" id="IPR020719">
    <property type="entry name" value="RNA3'_term_phos_cycl-like_CS"/>
</dbReference>
<dbReference type="InterPro" id="IPR013792">
    <property type="entry name" value="RNA3'P_cycl/enolpyr_Trfase_a/b"/>
</dbReference>
<dbReference type="InterPro" id="IPR036553">
    <property type="entry name" value="RPTC_insert"/>
</dbReference>
<dbReference type="NCBIfam" id="NF003246">
    <property type="entry name" value="PRK04204.1-2"/>
    <property type="match status" value="1"/>
</dbReference>
<dbReference type="NCBIfam" id="NF003247">
    <property type="entry name" value="PRK04204.1-3"/>
    <property type="match status" value="1"/>
</dbReference>
<dbReference type="NCBIfam" id="TIGR03399">
    <property type="entry name" value="RNA_3prim_cycl"/>
    <property type="match status" value="1"/>
</dbReference>
<dbReference type="PANTHER" id="PTHR11096">
    <property type="entry name" value="RNA 3' TERMINAL PHOSPHATE CYCLASE"/>
    <property type="match status" value="1"/>
</dbReference>
<dbReference type="PANTHER" id="PTHR11096:SF0">
    <property type="entry name" value="RNA 3'-TERMINAL PHOSPHATE CYCLASE"/>
    <property type="match status" value="1"/>
</dbReference>
<dbReference type="Pfam" id="PF01137">
    <property type="entry name" value="RTC"/>
    <property type="match status" value="1"/>
</dbReference>
<dbReference type="Pfam" id="PF05189">
    <property type="entry name" value="RTC_insert"/>
    <property type="match status" value="1"/>
</dbReference>
<dbReference type="PIRSF" id="PIRSF005378">
    <property type="entry name" value="RNA3'_term_phos_cycl_euk"/>
    <property type="match status" value="1"/>
</dbReference>
<dbReference type="SUPFAM" id="SSF55205">
    <property type="entry name" value="EPT/RTPC-like"/>
    <property type="match status" value="2"/>
</dbReference>
<dbReference type="SUPFAM" id="SSF52913">
    <property type="entry name" value="RNA 3'-terminal phosphate cyclase, RPTC, insert domain"/>
    <property type="match status" value="1"/>
</dbReference>
<dbReference type="PROSITE" id="PS01287">
    <property type="entry name" value="RTC"/>
    <property type="match status" value="1"/>
</dbReference>
<keyword id="KW-0067">ATP-binding</keyword>
<keyword id="KW-0963">Cytoplasm</keyword>
<keyword id="KW-0436">Ligase</keyword>
<keyword id="KW-0547">Nucleotide-binding</keyword>
<keyword id="KW-1185">Reference proteome</keyword>
<reference key="1">
    <citation type="journal article" date="2001" name="Nature">
        <title>Genome sequence of enterohaemorrhagic Escherichia coli O157:H7.</title>
        <authorList>
            <person name="Perna N.T."/>
            <person name="Plunkett G. III"/>
            <person name="Burland V."/>
            <person name="Mau B."/>
            <person name="Glasner J.D."/>
            <person name="Rose D.J."/>
            <person name="Mayhew G.F."/>
            <person name="Evans P.S."/>
            <person name="Gregor J."/>
            <person name="Kirkpatrick H.A."/>
            <person name="Posfai G."/>
            <person name="Hackett J."/>
            <person name="Klink S."/>
            <person name="Boutin A."/>
            <person name="Shao Y."/>
            <person name="Miller L."/>
            <person name="Grotbeck E.J."/>
            <person name="Davis N.W."/>
            <person name="Lim A."/>
            <person name="Dimalanta E.T."/>
            <person name="Potamousis K."/>
            <person name="Apodaca J."/>
            <person name="Anantharaman T.S."/>
            <person name="Lin J."/>
            <person name="Yen G."/>
            <person name="Schwartz D.C."/>
            <person name="Welch R.A."/>
            <person name="Blattner F.R."/>
        </authorList>
    </citation>
    <scope>NUCLEOTIDE SEQUENCE [LARGE SCALE GENOMIC DNA]</scope>
    <source>
        <strain>O157:H7 / EDL933 / ATCC 700927 / EHEC</strain>
    </source>
</reference>
<reference key="2">
    <citation type="journal article" date="2001" name="DNA Res.">
        <title>Complete genome sequence of enterohemorrhagic Escherichia coli O157:H7 and genomic comparison with a laboratory strain K-12.</title>
        <authorList>
            <person name="Hayashi T."/>
            <person name="Makino K."/>
            <person name="Ohnishi M."/>
            <person name="Kurokawa K."/>
            <person name="Ishii K."/>
            <person name="Yokoyama K."/>
            <person name="Han C.-G."/>
            <person name="Ohtsubo E."/>
            <person name="Nakayama K."/>
            <person name="Murata T."/>
            <person name="Tanaka M."/>
            <person name="Tobe T."/>
            <person name="Iida T."/>
            <person name="Takami H."/>
            <person name="Honda T."/>
            <person name="Sasakawa C."/>
            <person name="Ogasawara N."/>
            <person name="Yasunaga T."/>
            <person name="Kuhara S."/>
            <person name="Shiba T."/>
            <person name="Hattori M."/>
            <person name="Shinagawa H."/>
        </authorList>
    </citation>
    <scope>NUCLEOTIDE SEQUENCE [LARGE SCALE GENOMIC DNA]</scope>
    <source>
        <strain>O157:H7 / Sakai / RIMD 0509952 / EHEC</strain>
    </source>
</reference>
<feature type="chain" id="PRO_0000156418" description="RNA 3'-terminal phosphate cyclase">
    <location>
        <begin position="1"/>
        <end position="342"/>
    </location>
</feature>
<feature type="active site" description="Tele-AMP-histidine intermediate" evidence="1">
    <location>
        <position position="308"/>
    </location>
</feature>
<feature type="binding site" evidence="1">
    <location>
        <position position="103"/>
    </location>
    <ligand>
        <name>ATP</name>
        <dbReference type="ChEBI" id="CHEBI:30616"/>
    </ligand>
</feature>
<feature type="binding site" evidence="1">
    <location>
        <begin position="283"/>
        <end position="287"/>
    </location>
    <ligand>
        <name>ATP</name>
        <dbReference type="ChEBI" id="CHEBI:30616"/>
    </ligand>
</feature>
<comment type="function">
    <text evidence="1">Catalyzes the conversion of 3'-phosphate to a 2',3'-cyclic phosphodiester at the end of RNA. The mechanism of action of the enzyme occurs in 3 steps: (A) adenylation of the enzyme by ATP; (B) transfer of adenylate to an RNA-N3'P to produce RNA-N3'PP5'A; (C) and attack of the adjacent 2'-hydroxyl on the 3'-phosphorus in the diester linkage to produce the cyclic end product. The biological role of this enzyme is unknown but it is likely to function in some aspects of cellular RNA processing (By similarity).</text>
</comment>
<comment type="catalytic activity">
    <reaction>
        <text>a 3'-end 3'-phospho-ribonucleotide-RNA + ATP = a 3'-end 2',3'-cyclophospho-ribonucleotide-RNA + AMP + diphosphate</text>
        <dbReference type="Rhea" id="RHEA:23976"/>
        <dbReference type="Rhea" id="RHEA-COMP:10463"/>
        <dbReference type="Rhea" id="RHEA-COMP:10464"/>
        <dbReference type="ChEBI" id="CHEBI:30616"/>
        <dbReference type="ChEBI" id="CHEBI:33019"/>
        <dbReference type="ChEBI" id="CHEBI:83062"/>
        <dbReference type="ChEBI" id="CHEBI:83064"/>
        <dbReference type="ChEBI" id="CHEBI:456215"/>
        <dbReference type="EC" id="6.5.1.4"/>
    </reaction>
</comment>
<comment type="subcellular location">
    <subcellularLocation>
        <location evidence="1">Cytoplasm</location>
    </subcellularLocation>
</comment>
<comment type="similarity">
    <text evidence="2">Belongs to the RNA 3'-terminal cyclase family. Type 1 subfamily.</text>
</comment>
<gene>
    <name type="primary">rtcA</name>
    <name type="ordered locus">Z4778</name>
    <name type="ordered locus">ECs4263</name>
</gene>
<accession>P58127</accession>